<reference key="1">
    <citation type="journal article" date="2007" name="Proc. Natl. Acad. Sci. U.S.A.">
        <title>The genome of Syntrophus aciditrophicus: life at the thermodynamic limit of microbial growth.</title>
        <authorList>
            <person name="McInerney M.J."/>
            <person name="Rohlin L."/>
            <person name="Mouttaki H."/>
            <person name="Kim U."/>
            <person name="Krupp R.S."/>
            <person name="Rios-Hernandez L."/>
            <person name="Sieber J."/>
            <person name="Struchtemeyer C.G."/>
            <person name="Bhattacharyya A."/>
            <person name="Campbell J.W."/>
            <person name="Gunsalus R.P."/>
        </authorList>
    </citation>
    <scope>NUCLEOTIDE SEQUENCE [LARGE SCALE GENOMIC DNA]</scope>
    <source>
        <strain>SB</strain>
    </source>
</reference>
<gene>
    <name evidence="1" type="primary">lpxK</name>
    <name type="ordered locus">SYNAS_22430</name>
    <name type="ORF">SYN_01563</name>
</gene>
<sequence>MNVRERCRRLWEDPGPRKDRSPFALLLEVFSLFYRVGVVLRNDFYDRELFRSVRLPCRVISVGNVTAGGTGKTPMVILLARLLKDLGYRPAVLSRGYGGKGKAPVNIVSDGASILMSPLEGGDEPVLIARSVPGIPVLTGSDRCLTGRNAIERMGADVLILDDGFQHRRLFRDINIVLLDSDRPWGNGFLLPRGPLREPPTRALRRADIVIRTGGMHNRTSGEAAGTQVETGDSGAVLLRSSPIFRGIHQPCALISLDGGRKMDLQYLAGERICAFAGIGVPEQFRKTLESLGAEIVEFLAYPDHHRYDSSDLAFIERTAKEARAEMIVTTEKDEIKLAPMEKLALPACFLSIEMRVKPQKSFEHLVLEMMKDG</sequence>
<name>LPXK_SYNAS</name>
<comment type="function">
    <text evidence="1">Transfers the gamma-phosphate of ATP to the 4'-position of a tetraacyldisaccharide 1-phosphate intermediate (termed DS-1-P) to form tetraacyldisaccharide 1,4'-bis-phosphate (lipid IVA).</text>
</comment>
<comment type="catalytic activity">
    <reaction evidence="1">
        <text>a lipid A disaccharide + ATP = a lipid IVA + ADP + H(+)</text>
        <dbReference type="Rhea" id="RHEA:67840"/>
        <dbReference type="ChEBI" id="CHEBI:15378"/>
        <dbReference type="ChEBI" id="CHEBI:30616"/>
        <dbReference type="ChEBI" id="CHEBI:176343"/>
        <dbReference type="ChEBI" id="CHEBI:176425"/>
        <dbReference type="ChEBI" id="CHEBI:456216"/>
        <dbReference type="EC" id="2.7.1.130"/>
    </reaction>
</comment>
<comment type="pathway">
    <text evidence="1">Glycolipid biosynthesis; lipid IV(A) biosynthesis; lipid IV(A) from (3R)-3-hydroxytetradecanoyl-[acyl-carrier-protein] and UDP-N-acetyl-alpha-D-glucosamine: step 6/6.</text>
</comment>
<comment type="similarity">
    <text evidence="1">Belongs to the LpxK family.</text>
</comment>
<protein>
    <recommendedName>
        <fullName evidence="1">Tetraacyldisaccharide 4'-kinase</fullName>
        <ecNumber evidence="1">2.7.1.130</ecNumber>
    </recommendedName>
    <alternativeName>
        <fullName evidence="1">Lipid A 4'-kinase</fullName>
    </alternativeName>
</protein>
<accession>Q2LVL1</accession>
<evidence type="ECO:0000255" key="1">
    <source>
        <dbReference type="HAMAP-Rule" id="MF_00409"/>
    </source>
</evidence>
<dbReference type="EC" id="2.7.1.130" evidence="1"/>
<dbReference type="EMBL" id="CP000252">
    <property type="protein sequence ID" value="ABC78122.1"/>
    <property type="molecule type" value="Genomic_DNA"/>
</dbReference>
<dbReference type="RefSeq" id="WP_011418142.1">
    <property type="nucleotide sequence ID" value="NC_007759.1"/>
</dbReference>
<dbReference type="SMR" id="Q2LVL1"/>
<dbReference type="FunCoup" id="Q2LVL1">
    <property type="interactions" value="206"/>
</dbReference>
<dbReference type="STRING" id="56780.SYN_01563"/>
<dbReference type="KEGG" id="sat:SYN_01563"/>
<dbReference type="eggNOG" id="COG1663">
    <property type="taxonomic scope" value="Bacteria"/>
</dbReference>
<dbReference type="HOGENOM" id="CLU_038816_6_0_7"/>
<dbReference type="InParanoid" id="Q2LVL1"/>
<dbReference type="OrthoDB" id="9766423at2"/>
<dbReference type="UniPathway" id="UPA00359">
    <property type="reaction ID" value="UER00482"/>
</dbReference>
<dbReference type="Proteomes" id="UP000001933">
    <property type="component" value="Chromosome"/>
</dbReference>
<dbReference type="GO" id="GO:0005886">
    <property type="term" value="C:plasma membrane"/>
    <property type="evidence" value="ECO:0007669"/>
    <property type="project" value="TreeGrafter"/>
</dbReference>
<dbReference type="GO" id="GO:0005524">
    <property type="term" value="F:ATP binding"/>
    <property type="evidence" value="ECO:0007669"/>
    <property type="project" value="UniProtKB-UniRule"/>
</dbReference>
<dbReference type="GO" id="GO:0009029">
    <property type="term" value="F:tetraacyldisaccharide 4'-kinase activity"/>
    <property type="evidence" value="ECO:0007669"/>
    <property type="project" value="UniProtKB-UniRule"/>
</dbReference>
<dbReference type="GO" id="GO:0009245">
    <property type="term" value="P:lipid A biosynthetic process"/>
    <property type="evidence" value="ECO:0007669"/>
    <property type="project" value="UniProtKB-UniRule"/>
</dbReference>
<dbReference type="GO" id="GO:0009244">
    <property type="term" value="P:lipopolysaccharide core region biosynthetic process"/>
    <property type="evidence" value="ECO:0007669"/>
    <property type="project" value="TreeGrafter"/>
</dbReference>
<dbReference type="CDD" id="cd01983">
    <property type="entry name" value="SIMIBI"/>
    <property type="match status" value="1"/>
</dbReference>
<dbReference type="HAMAP" id="MF_00409">
    <property type="entry name" value="LpxK"/>
    <property type="match status" value="1"/>
</dbReference>
<dbReference type="InterPro" id="IPR003758">
    <property type="entry name" value="LpxK"/>
</dbReference>
<dbReference type="InterPro" id="IPR027417">
    <property type="entry name" value="P-loop_NTPase"/>
</dbReference>
<dbReference type="NCBIfam" id="TIGR00682">
    <property type="entry name" value="lpxK"/>
    <property type="match status" value="1"/>
</dbReference>
<dbReference type="PANTHER" id="PTHR42724">
    <property type="entry name" value="TETRAACYLDISACCHARIDE 4'-KINASE"/>
    <property type="match status" value="1"/>
</dbReference>
<dbReference type="PANTHER" id="PTHR42724:SF1">
    <property type="entry name" value="TETRAACYLDISACCHARIDE 4'-KINASE, MITOCHONDRIAL-RELATED"/>
    <property type="match status" value="1"/>
</dbReference>
<dbReference type="Pfam" id="PF02606">
    <property type="entry name" value="LpxK"/>
    <property type="match status" value="1"/>
</dbReference>
<dbReference type="SUPFAM" id="SSF52540">
    <property type="entry name" value="P-loop containing nucleoside triphosphate hydrolases"/>
    <property type="match status" value="1"/>
</dbReference>
<organism>
    <name type="scientific">Syntrophus aciditrophicus (strain SB)</name>
    <dbReference type="NCBI Taxonomy" id="56780"/>
    <lineage>
        <taxon>Bacteria</taxon>
        <taxon>Pseudomonadati</taxon>
        <taxon>Thermodesulfobacteriota</taxon>
        <taxon>Syntrophia</taxon>
        <taxon>Syntrophales</taxon>
        <taxon>Syntrophaceae</taxon>
        <taxon>Syntrophus</taxon>
    </lineage>
</organism>
<keyword id="KW-0067">ATP-binding</keyword>
<keyword id="KW-0418">Kinase</keyword>
<keyword id="KW-0441">Lipid A biosynthesis</keyword>
<keyword id="KW-0444">Lipid biosynthesis</keyword>
<keyword id="KW-0443">Lipid metabolism</keyword>
<keyword id="KW-0547">Nucleotide-binding</keyword>
<keyword id="KW-1185">Reference proteome</keyword>
<keyword id="KW-0808">Transferase</keyword>
<feature type="chain" id="PRO_0000291252" description="Tetraacyldisaccharide 4'-kinase">
    <location>
        <begin position="1"/>
        <end position="374"/>
    </location>
</feature>
<feature type="binding site" evidence="1">
    <location>
        <begin position="66"/>
        <end position="73"/>
    </location>
    <ligand>
        <name>ATP</name>
        <dbReference type="ChEBI" id="CHEBI:30616"/>
    </ligand>
</feature>
<proteinExistence type="inferred from homology"/>